<proteinExistence type="evidence at protein level"/>
<organism>
    <name type="scientific">Escherichia coli (strain K12)</name>
    <dbReference type="NCBI Taxonomy" id="83333"/>
    <lineage>
        <taxon>Bacteria</taxon>
        <taxon>Pseudomonadati</taxon>
        <taxon>Pseudomonadota</taxon>
        <taxon>Gammaproteobacteria</taxon>
        <taxon>Enterobacterales</taxon>
        <taxon>Enterobacteriaceae</taxon>
        <taxon>Escherichia</taxon>
    </lineage>
</organism>
<accession>P77489</accession>
<accession>Q2MCD8</accession>
<protein>
    <recommendedName>
        <fullName evidence="6">Aldehyde oxidoreductase molybdenum-binding subunit PaoC</fullName>
        <ecNumber evidence="1 2">1.2.99.6</ecNumber>
    </recommendedName>
</protein>
<dbReference type="EC" id="1.2.99.6" evidence="1 2"/>
<dbReference type="EMBL" id="U73857">
    <property type="protein sequence ID" value="AAB18013.1"/>
    <property type="molecule type" value="Genomic_DNA"/>
</dbReference>
<dbReference type="EMBL" id="U00096">
    <property type="protein sequence ID" value="AAC73387.1"/>
    <property type="molecule type" value="Genomic_DNA"/>
</dbReference>
<dbReference type="EMBL" id="AP009048">
    <property type="protein sequence ID" value="BAE76068.1"/>
    <property type="molecule type" value="Genomic_DNA"/>
</dbReference>
<dbReference type="PIR" id="D64754">
    <property type="entry name" value="D64754"/>
</dbReference>
<dbReference type="RefSeq" id="NP_414818.1">
    <property type="nucleotide sequence ID" value="NC_000913.3"/>
</dbReference>
<dbReference type="RefSeq" id="WP_000667026.1">
    <property type="nucleotide sequence ID" value="NZ_SSZK01000048.1"/>
</dbReference>
<dbReference type="PDB" id="5G5G">
    <property type="method" value="X-ray"/>
    <property type="resolution" value="1.70 A"/>
    <property type="chains" value="C=1-732"/>
</dbReference>
<dbReference type="PDB" id="5G5H">
    <property type="method" value="X-ray"/>
    <property type="resolution" value="2.30 A"/>
    <property type="chains" value="C=1-732"/>
</dbReference>
<dbReference type="PDBsum" id="5G5G"/>
<dbReference type="PDBsum" id="5G5H"/>
<dbReference type="SMR" id="P77489"/>
<dbReference type="BioGRID" id="4261492">
    <property type="interactions" value="29"/>
</dbReference>
<dbReference type="ComplexPortal" id="CPX-4281">
    <property type="entry name" value="PaoABC periplasmic aldehyde oxidoreductase"/>
</dbReference>
<dbReference type="FunCoup" id="P77489">
    <property type="interactions" value="150"/>
</dbReference>
<dbReference type="IntAct" id="P77489">
    <property type="interactions" value="11"/>
</dbReference>
<dbReference type="STRING" id="511145.b0284"/>
<dbReference type="jPOST" id="P77489"/>
<dbReference type="PaxDb" id="511145-b0284"/>
<dbReference type="EnsemblBacteria" id="AAC73387">
    <property type="protein sequence ID" value="AAC73387"/>
    <property type="gene ID" value="b0284"/>
</dbReference>
<dbReference type="GeneID" id="944961"/>
<dbReference type="KEGG" id="ecj:JW0278"/>
<dbReference type="KEGG" id="eco:b0284"/>
<dbReference type="KEGG" id="ecoc:C3026_01385"/>
<dbReference type="KEGG" id="ecoc:C3026_24020"/>
<dbReference type="PATRIC" id="fig|1411691.4.peg.1994"/>
<dbReference type="EchoBASE" id="EB3327"/>
<dbReference type="eggNOG" id="COG1529">
    <property type="taxonomic scope" value="Bacteria"/>
</dbReference>
<dbReference type="HOGENOM" id="CLU_001681_2_2_6"/>
<dbReference type="InParanoid" id="P77489"/>
<dbReference type="OMA" id="PYAYERH"/>
<dbReference type="OrthoDB" id="6177861at2"/>
<dbReference type="PhylomeDB" id="P77489"/>
<dbReference type="BioCyc" id="EcoCyc:G6155-MONOMER"/>
<dbReference type="BioCyc" id="MetaCyc:G6155-MONOMER"/>
<dbReference type="BRENDA" id="1.17.1.4">
    <property type="organism ID" value="2026"/>
</dbReference>
<dbReference type="PRO" id="PR:P77489"/>
<dbReference type="Proteomes" id="UP000000625">
    <property type="component" value="Chromosome"/>
</dbReference>
<dbReference type="GO" id="GO:0030288">
    <property type="term" value="C:outer membrane-bounded periplasmic space"/>
    <property type="evidence" value="ECO:0000303"/>
    <property type="project" value="EcoCyc"/>
</dbReference>
<dbReference type="GO" id="GO:1990204">
    <property type="term" value="C:oxidoreductase complex"/>
    <property type="evidence" value="ECO:0000353"/>
    <property type="project" value="ComplexPortal"/>
</dbReference>
<dbReference type="GO" id="GO:0042597">
    <property type="term" value="C:periplasmic space"/>
    <property type="evidence" value="ECO:0000303"/>
    <property type="project" value="ComplexPortal"/>
</dbReference>
<dbReference type="GO" id="GO:0047770">
    <property type="term" value="F:carboxylate reductase activity"/>
    <property type="evidence" value="ECO:0007669"/>
    <property type="project" value="UniProtKB-EC"/>
</dbReference>
<dbReference type="GO" id="GO:0005506">
    <property type="term" value="F:iron ion binding"/>
    <property type="evidence" value="ECO:0007669"/>
    <property type="project" value="InterPro"/>
</dbReference>
<dbReference type="GO" id="GO:0030151">
    <property type="term" value="F:molybdenum ion binding"/>
    <property type="evidence" value="ECO:0000314"/>
    <property type="project" value="EcoCyc"/>
</dbReference>
<dbReference type="GO" id="GO:0016491">
    <property type="term" value="F:oxidoreductase activity"/>
    <property type="evidence" value="ECO:0000318"/>
    <property type="project" value="GO_Central"/>
</dbReference>
<dbReference type="GO" id="GO:0016903">
    <property type="term" value="F:oxidoreductase activity, acting on the aldehyde or oxo group of donors"/>
    <property type="evidence" value="ECO:0000314"/>
    <property type="project" value="EcoCyc"/>
</dbReference>
<dbReference type="GO" id="GO:0009056">
    <property type="term" value="P:catabolic process"/>
    <property type="evidence" value="ECO:0000314"/>
    <property type="project" value="ComplexPortal"/>
</dbReference>
<dbReference type="GO" id="GO:0110095">
    <property type="term" value="P:cellular detoxification of aldehyde"/>
    <property type="evidence" value="ECO:0000314"/>
    <property type="project" value="ComplexPortal"/>
</dbReference>
<dbReference type="GO" id="GO:0006974">
    <property type="term" value="P:DNA damage response"/>
    <property type="evidence" value="ECO:0000270"/>
    <property type="project" value="EcoliWiki"/>
</dbReference>
<dbReference type="FunFam" id="3.30.365.10:FF:000016">
    <property type="entry name" value="Xanthine dehydrogenase yagR molybdenum-binding subunit"/>
    <property type="match status" value="1"/>
</dbReference>
<dbReference type="Gene3D" id="3.90.1170.50">
    <property type="entry name" value="Aldehyde oxidase/xanthine dehydrogenase, a/b hammerhead"/>
    <property type="match status" value="1"/>
</dbReference>
<dbReference type="Gene3D" id="3.30.365.10">
    <property type="entry name" value="Aldehyde oxidase/xanthine dehydrogenase, molybdopterin binding domain"/>
    <property type="match status" value="4"/>
</dbReference>
<dbReference type="InterPro" id="IPR000674">
    <property type="entry name" value="Ald_Oxase/Xan_DH_a/b"/>
</dbReference>
<dbReference type="InterPro" id="IPR036856">
    <property type="entry name" value="Ald_Oxase/Xan_DH_a/b_sf"/>
</dbReference>
<dbReference type="InterPro" id="IPR016208">
    <property type="entry name" value="Ald_Oxase/xanthine_DH-like"/>
</dbReference>
<dbReference type="InterPro" id="IPR008274">
    <property type="entry name" value="AldOxase/xan_DH_MoCoBD1"/>
</dbReference>
<dbReference type="InterPro" id="IPR046867">
    <property type="entry name" value="AldOxase/xan_DH_MoCoBD2"/>
</dbReference>
<dbReference type="InterPro" id="IPR037165">
    <property type="entry name" value="AldOxase/xan_DH_Mopterin-bd_sf"/>
</dbReference>
<dbReference type="InterPro" id="IPR049648">
    <property type="entry name" value="PaoC-like"/>
</dbReference>
<dbReference type="NCBIfam" id="NF041671">
    <property type="entry name" value="peri_hyde_PaoC"/>
    <property type="match status" value="1"/>
</dbReference>
<dbReference type="PANTHER" id="PTHR11908:SF123">
    <property type="entry name" value="ALDEHYDE OXIDOREDUCTASE MOLYBDENUM-BINDING SUBUNIT PAOC"/>
    <property type="match status" value="1"/>
</dbReference>
<dbReference type="PANTHER" id="PTHR11908">
    <property type="entry name" value="XANTHINE DEHYDROGENASE"/>
    <property type="match status" value="1"/>
</dbReference>
<dbReference type="Pfam" id="PF01315">
    <property type="entry name" value="Ald_Xan_dh_C"/>
    <property type="match status" value="1"/>
</dbReference>
<dbReference type="Pfam" id="PF02738">
    <property type="entry name" value="MoCoBD_1"/>
    <property type="match status" value="1"/>
</dbReference>
<dbReference type="Pfam" id="PF20256">
    <property type="entry name" value="MoCoBD_2"/>
    <property type="match status" value="1"/>
</dbReference>
<dbReference type="SMART" id="SM01008">
    <property type="entry name" value="Ald_Xan_dh_C"/>
    <property type="match status" value="1"/>
</dbReference>
<dbReference type="SUPFAM" id="SSF54665">
    <property type="entry name" value="CO dehydrogenase molybdoprotein N-domain-like"/>
    <property type="match status" value="1"/>
</dbReference>
<dbReference type="SUPFAM" id="SSF56003">
    <property type="entry name" value="Molybdenum cofactor-binding domain"/>
    <property type="match status" value="1"/>
</dbReference>
<keyword id="KW-0002">3D-structure</keyword>
<keyword id="KW-0479">Metal-binding</keyword>
<keyword id="KW-0500">Molybdenum</keyword>
<keyword id="KW-0560">Oxidoreductase</keyword>
<keyword id="KW-0574">Periplasm</keyword>
<keyword id="KW-1185">Reference proteome</keyword>
<evidence type="ECO:0000269" key="1">
    <source>
    </source>
</evidence>
<evidence type="ECO:0000269" key="2">
    <source>
    </source>
</evidence>
<evidence type="ECO:0000269" key="3">
    <source>
    </source>
</evidence>
<evidence type="ECO:0000269" key="4">
    <source>
    </source>
</evidence>
<evidence type="ECO:0000303" key="5">
    <source>
    </source>
</evidence>
<evidence type="ECO:0000305" key="6"/>
<evidence type="ECO:0000305" key="7">
    <source>
    </source>
</evidence>
<evidence type="ECO:0007744" key="8">
    <source>
        <dbReference type="PDB" id="5G5G"/>
    </source>
</evidence>
<evidence type="ECO:0007744" key="9">
    <source>
        <dbReference type="PDB" id="5G5H"/>
    </source>
</evidence>
<evidence type="ECO:0007829" key="10">
    <source>
        <dbReference type="PDB" id="5G5G"/>
    </source>
</evidence>
<comment type="function">
    <text evidence="1">Oxidizes aldehydes to the corresponding carboxylic acids with a preference for aromatic aldehydes. It might play a role in the detoxification of aldehydes to avoid cell damage.</text>
</comment>
<comment type="catalytic activity">
    <reaction evidence="1 2">
        <text>an aldehyde + A + H2O = a carboxylate + AH2 + H(+)</text>
        <dbReference type="Rhea" id="RHEA:56856"/>
        <dbReference type="ChEBI" id="CHEBI:13193"/>
        <dbReference type="ChEBI" id="CHEBI:15377"/>
        <dbReference type="ChEBI" id="CHEBI:15378"/>
        <dbReference type="ChEBI" id="CHEBI:17478"/>
        <dbReference type="ChEBI" id="CHEBI:17499"/>
        <dbReference type="ChEBI" id="CHEBI:29067"/>
        <dbReference type="EC" id="1.2.99.6"/>
    </reaction>
</comment>
<comment type="cofactor">
    <cofactor evidence="1 4">
        <name>Mo-molybdopterin cytosine dinucleotide</name>
        <dbReference type="ChEBI" id="CHEBI:71308"/>
    </cofactor>
</comment>
<comment type="activity regulation">
    <text evidence="1">The complex requires PaoD for activity.</text>
</comment>
<comment type="biophysicochemical properties">
    <kinetics>
        <KM evidence="1">63 uM for cinnamaldehyde</KM>
        <KM evidence="1">70 uM for benzaldehyde</KM>
        <KM evidence="1">132 uM for vanillin</KM>
        <text evidence="1">kcat is 84 sec(-1) with cinnamaldehyde as substrate. kcat is 97 sec(-1) with benzaldehyde as substrate. kcat is 125 sec(-1) with vanillin as substrate.</text>
    </kinetics>
    <phDependence>
        <text evidence="1">Stable up to a pH of 4.</text>
    </phDependence>
</comment>
<comment type="subunit">
    <text evidence="1 3 4">Heterotrimer composed of PaoA, PaoB and PaoC.</text>
</comment>
<comment type="subcellular location">
    <subcellularLocation>
        <location evidence="7">Periplasm</location>
    </subcellularLocation>
</comment>
<comment type="disruption phenotype">
    <text evidence="1">Mutation results in complete impairment of cell growth in the presence of cinnamaldehyde.</text>
</comment>
<comment type="similarity">
    <text evidence="6">Belongs to the xanthine dehydrogenase family.</text>
</comment>
<gene>
    <name evidence="5" type="primary">paoC</name>
    <name type="synonym">yagR</name>
    <name type="ordered locus">b0284</name>
    <name type="ordered locus">JW0278</name>
</gene>
<sequence>MKFDKPAGENPIDQLKVVGRPHDRIDGPLKTTGTARYAYEWHEEAPNAAYGYIVGSAIAKGRLTALDTDAAQKAPGVLAVITASNAGALGKGDKNTARLLGGPTIEHYHQAIALVVAETFEQARAAASLVQAHYRRNKGAYSLADEKQAVNQPPEDTPDKNVGDFDGAFTSAAVKIDATYTTPDQSHMAMEPHASMAVWDGNKLTLWTSNQMIDWCRTDLAKTLKVPVENVRIISPYIGGGFGGKLFLRSDALLAALAARAVKRPVKVMLPRPSIPNNTTHRPATLQHLRIGADQSGKITAISHESWSGNLPGGTPETAVQQSELLYAGANRHTGLRLATLDLPEGNAMRAPGEAPGLMALEIAIDELAEKAGIDPVEFRILNDTQVDPADPTRCFSRRQLIECLRTGADKFGWKQRNATPGQVRDGEWLVGHGVAAGFRNNLLEKSGARVHLEQNGTVTVETDMTDIGTGSYTILAQTAAEMLGVPLEQVAVHLGDSSFPVSAGSGGQWGANTSTSGVYAACMKLREMIASAVGFDPEQSQFADGKITNGTRSATLHEATAGGRLTAEESIEFGTLSKEYQQSTFAGHFVEVGVHSATGEVRVRRMLAVCAAGRILNPKTARSQVIGAMTMGMGAALMEELAVDDRLGYFVNHDMAGYEVPVHADIPKQEVIFLDDTDPISSPMKAKGVGELGLCGVSAAIANAVYNATGIRVRDYPITLDKLLDKLPDVV</sequence>
<name>PAOC_ECOLI</name>
<reference key="1">
    <citation type="submission" date="1997-01" db="EMBL/GenBank/DDBJ databases">
        <title>Sequence of minutes 4-25 of Escherichia coli.</title>
        <authorList>
            <person name="Chung E."/>
            <person name="Allen E."/>
            <person name="Araujo R."/>
            <person name="Aparicio A.M."/>
            <person name="Davis K."/>
            <person name="Duncan M."/>
            <person name="Federspiel N."/>
            <person name="Hyman R."/>
            <person name="Kalman S."/>
            <person name="Komp C."/>
            <person name="Kurdi O."/>
            <person name="Lew H."/>
            <person name="Lin D."/>
            <person name="Namath A."/>
            <person name="Oefner P."/>
            <person name="Roberts D."/>
            <person name="Schramm S."/>
            <person name="Davis R.W."/>
        </authorList>
    </citation>
    <scope>NUCLEOTIDE SEQUENCE [LARGE SCALE GENOMIC DNA]</scope>
    <source>
        <strain>K12 / MG1655 / ATCC 47076</strain>
    </source>
</reference>
<reference key="2">
    <citation type="journal article" date="1997" name="Science">
        <title>The complete genome sequence of Escherichia coli K-12.</title>
        <authorList>
            <person name="Blattner F.R."/>
            <person name="Plunkett G. III"/>
            <person name="Bloch C.A."/>
            <person name="Perna N.T."/>
            <person name="Burland V."/>
            <person name="Riley M."/>
            <person name="Collado-Vides J."/>
            <person name="Glasner J.D."/>
            <person name="Rode C.K."/>
            <person name="Mayhew G.F."/>
            <person name="Gregor J."/>
            <person name="Davis N.W."/>
            <person name="Kirkpatrick H.A."/>
            <person name="Goeden M.A."/>
            <person name="Rose D.J."/>
            <person name="Mau B."/>
            <person name="Shao Y."/>
        </authorList>
    </citation>
    <scope>NUCLEOTIDE SEQUENCE [LARGE SCALE GENOMIC DNA]</scope>
    <source>
        <strain>K12 / MG1655 / ATCC 47076</strain>
    </source>
</reference>
<reference key="3">
    <citation type="journal article" date="2006" name="Mol. Syst. Biol.">
        <title>Highly accurate genome sequences of Escherichia coli K-12 strains MG1655 and W3110.</title>
        <authorList>
            <person name="Hayashi K."/>
            <person name="Morooka N."/>
            <person name="Yamamoto Y."/>
            <person name="Fujita K."/>
            <person name="Isono K."/>
            <person name="Choi S."/>
            <person name="Ohtsubo E."/>
            <person name="Baba T."/>
            <person name="Wanner B.L."/>
            <person name="Mori H."/>
            <person name="Horiuchi T."/>
        </authorList>
    </citation>
    <scope>NUCLEOTIDE SEQUENCE [LARGE SCALE GENOMIC DNA]</scope>
    <source>
        <strain>K12 / W3110 / ATCC 27325 / DSM 5911</strain>
    </source>
</reference>
<reference key="4">
    <citation type="journal article" date="2009" name="FEBS J.">
        <title>A periplasmic aldehyde oxidoreductase represents the first molybdopterin cytosine dinucleotide cofactor containing molybdo-flavoenzyme from Escherichia coli.</title>
        <authorList>
            <person name="Neumann M."/>
            <person name="Mittelstaedt G."/>
            <person name="Iobbi-Nivol C."/>
            <person name="Saggu M."/>
            <person name="Lendzian F."/>
            <person name="Hildebrandt P."/>
            <person name="Leimkuehler S."/>
        </authorList>
    </citation>
    <scope>FUNCTION</scope>
    <scope>CATALYTIC ACTIVITY</scope>
    <scope>COFACTOR</scope>
    <scope>ACTIVITY REGULATION</scope>
    <scope>BIOPHYSICOCHEMICAL PROPERTIES</scope>
    <scope>SUBUNIT</scope>
    <scope>SUBCELLULAR LOCATION</scope>
    <scope>DISRUPTION PHENOTYPE</scope>
    <scope>ACTIVE SITE</scope>
    <scope>MUTAGENESIS OF GLU-692</scope>
</reference>
<reference key="5">
    <citation type="journal article" date="2011" name="J. Biol. Chem.">
        <title>Molybdopterin dinucleotide biosynthesis in Escherichia coli: identification of amino acid residues of molybdopterin dinucleotide transferases that determine specificity for binding of guanine or cytosine nucleotides.</title>
        <authorList>
            <person name="Neumann M."/>
            <person name="Seduk F."/>
            <person name="Iobbi-Nivol C."/>
            <person name="Leimkuhler S."/>
        </authorList>
    </citation>
    <scope>CATALYTIC ACTIVITY</scope>
    <scope>NOMENCLATURE</scope>
</reference>
<reference key="6">
    <citation type="journal article" date="2014" name="Int. J. Mol. Sci.">
        <title>Structural data on the periplasmic aldehyde oxidoreductase PaoABC from Escherichia coli: SAXS and preliminary X-ray crystallography analysis.</title>
        <authorList>
            <person name="Otrelo-Cardoso A.R."/>
            <person name="da Silva Correia M.A."/>
            <person name="Schwuchow V."/>
            <person name="Svergun D.I."/>
            <person name="Romao M.J."/>
            <person name="Leimkuehler S."/>
            <person name="Santos-Silva T."/>
        </authorList>
    </citation>
    <scope>CRYSTALLIZATION</scope>
    <scope>SUBUNIT</scope>
</reference>
<reference evidence="8 9" key="7">
    <citation type="journal article" date="2016" name="ACS Chem. Biol.">
        <title>The Escherichia coli periplasmic aldehyde oxidoreductase is an exceptional member of the xanthine oxidase family of molybdoenzymes.</title>
        <authorList>
            <person name="Correia M.A."/>
            <person name="Otrelo-Cardoso A.R."/>
            <person name="Schwuchow V."/>
            <person name="Sigfridsson Clauss K.G."/>
            <person name="Haumann M."/>
            <person name="Romao M.J."/>
            <person name="Leimkuhler S."/>
            <person name="Santos-Silva T."/>
        </authorList>
    </citation>
    <scope>X-RAY CRYSTALLOGRAPHY (1.70 ANGSTROMS) IN COMPLEX WITH MOLYBDOPTERIN CYTOSINE DINUCLEOTIDE</scope>
    <scope>COFACTOR</scope>
    <scope>SUBUNIT</scope>
    <scope>MUTAGENESIS OF ARG-440</scope>
</reference>
<feature type="chain" id="PRO_0000166090" description="Aldehyde oxidoreductase molybdenum-binding subunit PaoC">
    <location>
        <begin position="1"/>
        <end position="732"/>
    </location>
</feature>
<feature type="active site" description="Proton acceptor" evidence="7">
    <location>
        <position position="692"/>
    </location>
</feature>
<feature type="binding site" evidence="4 8 9">
    <location>
        <begin position="241"/>
        <end position="242"/>
    </location>
    <ligand>
        <name>Mo-molybdopterin cytosine dinucleotide</name>
        <dbReference type="ChEBI" id="CHEBI:71308"/>
    </ligand>
</feature>
<feature type="binding site" evidence="4 8 9">
    <location>
        <begin position="468"/>
        <end position="470"/>
    </location>
    <ligand>
        <name>Mo-molybdopterin cytosine dinucleotide</name>
        <dbReference type="ChEBI" id="CHEBI:71308"/>
    </ligand>
</feature>
<feature type="binding site" evidence="4 8 9">
    <location>
        <begin position="511"/>
        <end position="512"/>
    </location>
    <ligand>
        <name>Mo-molybdopterin cytosine dinucleotide</name>
        <dbReference type="ChEBI" id="CHEBI:71308"/>
    </ligand>
</feature>
<feature type="binding site" evidence="4 8 9">
    <location>
        <begin position="615"/>
        <end position="621"/>
    </location>
    <ligand>
        <name>Mo-molybdopterin cytosine dinucleotide</name>
        <dbReference type="ChEBI" id="CHEBI:71308"/>
    </ligand>
</feature>
<feature type="binding site" evidence="4 8 9">
    <location>
        <position position="625"/>
    </location>
    <ligand>
        <name>Mo-molybdopterin cytosine dinucleotide</name>
        <dbReference type="ChEBI" id="CHEBI:71308"/>
    </ligand>
</feature>
<feature type="binding site" evidence="4 8 9">
    <location>
        <begin position="688"/>
        <end position="691"/>
    </location>
    <ligand>
        <name>Mo-molybdopterin cytosine dinucleotide</name>
        <dbReference type="ChEBI" id="CHEBI:71308"/>
    </ligand>
</feature>
<feature type="mutagenesis site" description="Decrease in catalytic efficiency." evidence="4">
    <original>R</original>
    <variation>H</variation>
    <variation>K</variation>
    <location>
        <position position="440"/>
    </location>
</feature>
<feature type="mutagenesis site" description="Loss of activity." evidence="1">
    <original>E</original>
    <variation>Q</variation>
    <location>
        <position position="692"/>
    </location>
</feature>
<feature type="helix" evidence="10">
    <location>
        <begin position="11"/>
        <end position="14"/>
    </location>
</feature>
<feature type="helix" evidence="10">
    <location>
        <begin position="27"/>
        <end position="31"/>
    </location>
</feature>
<feature type="helix" evidence="10">
    <location>
        <begin position="38"/>
        <end position="40"/>
    </location>
</feature>
<feature type="helix" evidence="10">
    <location>
        <begin position="42"/>
        <end position="44"/>
    </location>
</feature>
<feature type="strand" evidence="10">
    <location>
        <begin position="49"/>
        <end position="55"/>
    </location>
</feature>
<feature type="strand" evidence="10">
    <location>
        <begin position="57"/>
        <end position="67"/>
    </location>
</feature>
<feature type="helix" evidence="10">
    <location>
        <begin position="69"/>
        <end position="72"/>
    </location>
</feature>
<feature type="strand" evidence="10">
    <location>
        <begin position="77"/>
        <end position="82"/>
    </location>
</feature>
<feature type="helix" evidence="10">
    <location>
        <begin position="83"/>
        <end position="86"/>
    </location>
</feature>
<feature type="strand" evidence="10">
    <location>
        <begin position="103"/>
        <end position="105"/>
    </location>
</feature>
<feature type="strand" evidence="10">
    <location>
        <begin position="111"/>
        <end position="119"/>
    </location>
</feature>
<feature type="helix" evidence="10">
    <location>
        <begin position="120"/>
        <end position="127"/>
    </location>
</feature>
<feature type="strand" evidence="10">
    <location>
        <begin position="131"/>
        <end position="136"/>
    </location>
</feature>
<feature type="helix" evidence="10">
    <location>
        <begin position="143"/>
        <end position="147"/>
    </location>
</feature>
<feature type="strand" evidence="10">
    <location>
        <begin position="160"/>
        <end position="163"/>
    </location>
</feature>
<feature type="helix" evidence="10">
    <location>
        <begin position="165"/>
        <end position="171"/>
    </location>
</feature>
<feature type="strand" evidence="10">
    <location>
        <begin position="173"/>
        <end position="182"/>
    </location>
</feature>
<feature type="strand" evidence="10">
    <location>
        <begin position="194"/>
        <end position="200"/>
    </location>
</feature>
<feature type="strand" evidence="10">
    <location>
        <begin position="203"/>
        <end position="208"/>
    </location>
</feature>
<feature type="helix" evidence="10">
    <location>
        <begin position="213"/>
        <end position="224"/>
    </location>
</feature>
<feature type="helix" evidence="10">
    <location>
        <begin position="228"/>
        <end position="230"/>
    </location>
</feature>
<feature type="strand" evidence="10">
    <location>
        <begin position="231"/>
        <end position="234"/>
    </location>
</feature>
<feature type="turn" evidence="10">
    <location>
        <begin position="242"/>
        <end position="245"/>
    </location>
</feature>
<feature type="helix" evidence="10">
    <location>
        <begin position="250"/>
        <end position="262"/>
    </location>
</feature>
<feature type="strand" evidence="10">
    <location>
        <begin position="266"/>
        <end position="269"/>
    </location>
</feature>
<feature type="helix" evidence="10">
    <location>
        <begin position="272"/>
        <end position="274"/>
    </location>
</feature>
<feature type="helix" evidence="10">
    <location>
        <begin position="275"/>
        <end position="278"/>
    </location>
</feature>
<feature type="strand" evidence="10">
    <location>
        <begin position="285"/>
        <end position="293"/>
    </location>
</feature>
<feature type="strand" evidence="10">
    <location>
        <begin position="299"/>
        <end position="311"/>
    </location>
</feature>
<feature type="helix" evidence="10">
    <location>
        <begin position="321"/>
        <end position="324"/>
    </location>
</feature>
<feature type="strand" evidence="10">
    <location>
        <begin position="330"/>
        <end position="340"/>
    </location>
</feature>
<feature type="helix" evidence="10">
    <location>
        <begin position="354"/>
        <end position="372"/>
    </location>
</feature>
<feature type="helix" evidence="10">
    <location>
        <begin position="376"/>
        <end position="382"/>
    </location>
</feature>
<feature type="strand" evidence="10">
    <location>
        <begin position="386"/>
        <end position="388"/>
    </location>
</feature>
<feature type="strand" evidence="10">
    <location>
        <begin position="391"/>
        <end position="397"/>
    </location>
</feature>
<feature type="helix" evidence="10">
    <location>
        <begin position="401"/>
        <end position="412"/>
    </location>
</feature>
<feature type="helix" evidence="10">
    <location>
        <begin position="414"/>
        <end position="416"/>
    </location>
</feature>
<feature type="strand" evidence="10">
    <location>
        <begin position="429"/>
        <end position="441"/>
    </location>
</feature>
<feature type="strand" evidence="10">
    <location>
        <begin position="447"/>
        <end position="453"/>
    </location>
</feature>
<feature type="strand" evidence="10">
    <location>
        <begin position="459"/>
        <end position="462"/>
    </location>
</feature>
<feature type="strand" evidence="10">
    <location>
        <begin position="468"/>
        <end position="470"/>
    </location>
</feature>
<feature type="helix" evidence="10">
    <location>
        <begin position="472"/>
        <end position="484"/>
    </location>
</feature>
<feature type="helix" evidence="10">
    <location>
        <begin position="488"/>
        <end position="490"/>
    </location>
</feature>
<feature type="strand" evidence="10">
    <location>
        <begin position="491"/>
        <end position="494"/>
    </location>
</feature>
<feature type="helix" evidence="10">
    <location>
        <begin position="511"/>
        <end position="534"/>
    </location>
</feature>
<feature type="helix" evidence="10">
    <location>
        <begin position="538"/>
        <end position="540"/>
    </location>
</feature>
<feature type="strand" evidence="10">
    <location>
        <begin position="541"/>
        <end position="544"/>
    </location>
</feature>
<feature type="strand" evidence="10">
    <location>
        <begin position="547"/>
        <end position="550"/>
    </location>
</feature>
<feature type="strand" evidence="10">
    <location>
        <begin position="553"/>
        <end position="556"/>
    </location>
</feature>
<feature type="helix" evidence="10">
    <location>
        <begin position="557"/>
        <end position="560"/>
    </location>
</feature>
<feature type="turn" evidence="10">
    <location>
        <begin position="561"/>
        <end position="563"/>
    </location>
</feature>
<feature type="strand" evidence="10">
    <location>
        <begin position="566"/>
        <end position="574"/>
    </location>
</feature>
<feature type="helix" evidence="10">
    <location>
        <begin position="577"/>
        <end position="580"/>
    </location>
</feature>
<feature type="strand" evidence="10">
    <location>
        <begin position="584"/>
        <end position="596"/>
    </location>
</feature>
<feature type="turn" evidence="10">
    <location>
        <begin position="597"/>
        <end position="599"/>
    </location>
</feature>
<feature type="strand" evidence="10">
    <location>
        <begin position="602"/>
        <end position="612"/>
    </location>
</feature>
<feature type="helix" evidence="10">
    <location>
        <begin position="619"/>
        <end position="638"/>
    </location>
</feature>
<feature type="turn" evidence="10">
    <location>
        <begin position="646"/>
        <end position="649"/>
    </location>
</feature>
<feature type="strand" evidence="10">
    <location>
        <begin position="650"/>
        <end position="653"/>
    </location>
</feature>
<feature type="turn" evidence="10">
    <location>
        <begin position="656"/>
        <end position="658"/>
    </location>
</feature>
<feature type="helix" evidence="10">
    <location>
        <begin position="664"/>
        <end position="666"/>
    </location>
</feature>
<feature type="strand" evidence="10">
    <location>
        <begin position="669"/>
        <end position="674"/>
    </location>
</feature>
<feature type="turn" evidence="10">
    <location>
        <begin position="680"/>
        <end position="682"/>
    </location>
</feature>
<feature type="helix" evidence="10">
    <location>
        <begin position="693"/>
        <end position="695"/>
    </location>
</feature>
<feature type="helix" evidence="10">
    <location>
        <begin position="698"/>
        <end position="710"/>
    </location>
</feature>
<feature type="strand" evidence="10">
    <location>
        <begin position="716"/>
        <end position="718"/>
    </location>
</feature>
<feature type="helix" evidence="10">
    <location>
        <begin position="721"/>
        <end position="723"/>
    </location>
</feature>
<feature type="helix" evidence="10">
    <location>
        <begin position="725"/>
        <end position="727"/>
    </location>
</feature>